<gene>
    <name type="primary">mltE</name>
    <name type="ordered locus">bbp_245</name>
</gene>
<comment type="function">
    <text evidence="1">Murein-degrading enzyme. May play a role in recycling of muropeptides during cell elongation and/or cell division (By similarity).</text>
</comment>
<comment type="catalytic activity">
    <reaction>
        <text>Exolytic cleavage of the (1-&gt;4)-beta-glycosidic linkage between N-acetylmuramic acid (MurNAc) and N-acetylglucosamine (GlcNAc) residues in peptidoglycan, from either the reducing or the non-reducing ends of the peptidoglycan chains, with concomitant formation of a 1,6-anhydrobond in the MurNAc residue.</text>
        <dbReference type="EC" id="4.2.2.n1"/>
    </reaction>
</comment>
<comment type="similarity">
    <text evidence="2">Belongs to the transglycosylase Slt family.</text>
</comment>
<feature type="chain" id="PRO_0000196571" description="Membrane-bound lytic murein transglycosylase E">
    <location>
        <begin position="1"/>
        <end position="212"/>
    </location>
</feature>
<proteinExistence type="inferred from homology"/>
<organism>
    <name type="scientific">Buchnera aphidicola subsp. Baizongia pistaciae (strain Bp)</name>
    <dbReference type="NCBI Taxonomy" id="224915"/>
    <lineage>
        <taxon>Bacteria</taxon>
        <taxon>Pseudomonadati</taxon>
        <taxon>Pseudomonadota</taxon>
        <taxon>Gammaproteobacteria</taxon>
        <taxon>Enterobacterales</taxon>
        <taxon>Erwiniaceae</taxon>
        <taxon>Buchnera</taxon>
    </lineage>
</organism>
<protein>
    <recommendedName>
        <fullName>Membrane-bound lytic murein transglycosylase E</fullName>
        <ecNumber>4.2.2.n1</ecNumber>
    </recommendedName>
    <alternativeName>
        <fullName>Murein hydrolase E</fullName>
    </alternativeName>
</protein>
<keyword id="KW-0961">Cell wall biogenesis/degradation</keyword>
<keyword id="KW-0456">Lyase</keyword>
<keyword id="KW-1185">Reference proteome</keyword>
<accession>Q89AM2</accession>
<dbReference type="EC" id="4.2.2.n1"/>
<dbReference type="EMBL" id="AE016826">
    <property type="protein sequence ID" value="AAO26972.1"/>
    <property type="molecule type" value="Genomic_DNA"/>
</dbReference>
<dbReference type="RefSeq" id="WP_011091373.1">
    <property type="nucleotide sequence ID" value="NC_004545.1"/>
</dbReference>
<dbReference type="SMR" id="Q89AM2"/>
<dbReference type="STRING" id="224915.bbp_245"/>
<dbReference type="CAZy" id="GH23">
    <property type="family name" value="Glycoside Hydrolase Family 23"/>
</dbReference>
<dbReference type="KEGG" id="bab:bbp_245"/>
<dbReference type="eggNOG" id="COG0741">
    <property type="taxonomic scope" value="Bacteria"/>
</dbReference>
<dbReference type="HOGENOM" id="CLU_103257_0_0_6"/>
<dbReference type="Proteomes" id="UP000000601">
    <property type="component" value="Chromosome"/>
</dbReference>
<dbReference type="GO" id="GO:0016829">
    <property type="term" value="F:lyase activity"/>
    <property type="evidence" value="ECO:0007669"/>
    <property type="project" value="UniProtKB-KW"/>
</dbReference>
<dbReference type="GO" id="GO:0071555">
    <property type="term" value="P:cell wall organization"/>
    <property type="evidence" value="ECO:0007669"/>
    <property type="project" value="UniProtKB-KW"/>
</dbReference>
<dbReference type="CDD" id="cd16893">
    <property type="entry name" value="LT_MltC_MltE"/>
    <property type="match status" value="1"/>
</dbReference>
<dbReference type="Gene3D" id="1.10.530.10">
    <property type="match status" value="1"/>
</dbReference>
<dbReference type="InterPro" id="IPR023346">
    <property type="entry name" value="Lysozyme-like_dom_sf"/>
</dbReference>
<dbReference type="InterPro" id="IPR008258">
    <property type="entry name" value="Transglycosylase_SLT_dom_1"/>
</dbReference>
<dbReference type="PANTHER" id="PTHR37423:SF4">
    <property type="entry name" value="ENDO-TYPE MEMBRANE-BOUND LYTIC MUREIN TRANSGLYCOSYLASE A"/>
    <property type="match status" value="1"/>
</dbReference>
<dbReference type="PANTHER" id="PTHR37423">
    <property type="entry name" value="SOLUBLE LYTIC MUREIN TRANSGLYCOSYLASE-RELATED"/>
    <property type="match status" value="1"/>
</dbReference>
<dbReference type="Pfam" id="PF01464">
    <property type="entry name" value="SLT"/>
    <property type="match status" value="1"/>
</dbReference>
<dbReference type="SUPFAM" id="SSF53955">
    <property type="entry name" value="Lysozyme-like"/>
    <property type="match status" value="1"/>
</dbReference>
<reference key="1">
    <citation type="journal article" date="2003" name="Proc. Natl. Acad. Sci. U.S.A.">
        <title>Reductive genome evolution in Buchnera aphidicola.</title>
        <authorList>
            <person name="van Ham R.C.H.J."/>
            <person name="Kamerbeek J."/>
            <person name="Palacios C."/>
            <person name="Rausell C."/>
            <person name="Abascal F."/>
            <person name="Bastolla U."/>
            <person name="Fernandez J.M."/>
            <person name="Jimenez L."/>
            <person name="Postigo M."/>
            <person name="Silva F.J."/>
            <person name="Tamames J."/>
            <person name="Viguera E."/>
            <person name="Latorre A."/>
            <person name="Valencia A."/>
            <person name="Moran F."/>
            <person name="Moya A."/>
        </authorList>
    </citation>
    <scope>NUCLEOTIDE SEQUENCE [LARGE SCALE GENOMIC DNA]</scope>
    <source>
        <strain>Bp</strain>
    </source>
</reference>
<sequence>MKKVILFTYVIIFLVFLSGYSVVTKNIVHNIKNNYKNNVCSMKVMHLWFKIINLFSKKYNVDKKLITAIICVESSGNTHAVSISKAIGLMQIKPFSAGREVYRFRGLLNQPSDVDLYDPKINIDIGTSYINILRNKILSGIKNSEILLYATIISYAHGASKLLKSFSYNKTLAIKKINKMKIKEFLDYIHNKYSEKKAWDYLSKVMYVYHLV</sequence>
<name>MLTE_BUCBP</name>
<evidence type="ECO:0000250" key="1"/>
<evidence type="ECO:0000305" key="2"/>